<keyword id="KW-0687">Ribonucleoprotein</keyword>
<keyword id="KW-0689">Ribosomal protein</keyword>
<comment type="function">
    <text evidence="1">Involved in the binding of tRNA to the ribosomes.</text>
</comment>
<comment type="subunit">
    <text evidence="1">Part of the 30S ribosomal subunit.</text>
</comment>
<comment type="similarity">
    <text evidence="1">Belongs to the universal ribosomal protein uS10 family.</text>
</comment>
<name>RS10_ECOSM</name>
<sequence>MQNQRIRIRLKAFDHRLIDQATAEIVETAKRTGAQVRGPIPLPTRKERFTVLISPHVNKDARDQYEIRTHLRLVDIVEPTEKTVDALMRLDLAAGVDVQISLG</sequence>
<dbReference type="EMBL" id="CP000970">
    <property type="protein sequence ID" value="ACB19522.1"/>
    <property type="molecule type" value="Genomic_DNA"/>
</dbReference>
<dbReference type="RefSeq" id="WP_001181004.1">
    <property type="nucleotide sequence ID" value="NC_010498.1"/>
</dbReference>
<dbReference type="SMR" id="B1LHD5"/>
<dbReference type="GeneID" id="93778666"/>
<dbReference type="KEGG" id="ecm:EcSMS35_3616"/>
<dbReference type="HOGENOM" id="CLU_122625_1_3_6"/>
<dbReference type="Proteomes" id="UP000007011">
    <property type="component" value="Chromosome"/>
</dbReference>
<dbReference type="GO" id="GO:1990904">
    <property type="term" value="C:ribonucleoprotein complex"/>
    <property type="evidence" value="ECO:0007669"/>
    <property type="project" value="UniProtKB-KW"/>
</dbReference>
<dbReference type="GO" id="GO:0005840">
    <property type="term" value="C:ribosome"/>
    <property type="evidence" value="ECO:0007669"/>
    <property type="project" value="UniProtKB-KW"/>
</dbReference>
<dbReference type="GO" id="GO:0003735">
    <property type="term" value="F:structural constituent of ribosome"/>
    <property type="evidence" value="ECO:0007669"/>
    <property type="project" value="InterPro"/>
</dbReference>
<dbReference type="GO" id="GO:0000049">
    <property type="term" value="F:tRNA binding"/>
    <property type="evidence" value="ECO:0007669"/>
    <property type="project" value="UniProtKB-UniRule"/>
</dbReference>
<dbReference type="GO" id="GO:0006412">
    <property type="term" value="P:translation"/>
    <property type="evidence" value="ECO:0007669"/>
    <property type="project" value="UniProtKB-UniRule"/>
</dbReference>
<dbReference type="FunFam" id="3.30.70.600:FF:000001">
    <property type="entry name" value="30S ribosomal protein S10"/>
    <property type="match status" value="1"/>
</dbReference>
<dbReference type="Gene3D" id="3.30.70.600">
    <property type="entry name" value="Ribosomal protein S10 domain"/>
    <property type="match status" value="1"/>
</dbReference>
<dbReference type="HAMAP" id="MF_00508">
    <property type="entry name" value="Ribosomal_uS10"/>
    <property type="match status" value="1"/>
</dbReference>
<dbReference type="InterPro" id="IPR001848">
    <property type="entry name" value="Ribosomal_uS10"/>
</dbReference>
<dbReference type="InterPro" id="IPR018268">
    <property type="entry name" value="Ribosomal_uS10_CS"/>
</dbReference>
<dbReference type="InterPro" id="IPR027486">
    <property type="entry name" value="Ribosomal_uS10_dom"/>
</dbReference>
<dbReference type="InterPro" id="IPR036838">
    <property type="entry name" value="Ribosomal_uS10_dom_sf"/>
</dbReference>
<dbReference type="NCBIfam" id="NF001861">
    <property type="entry name" value="PRK00596.1"/>
    <property type="match status" value="1"/>
</dbReference>
<dbReference type="NCBIfam" id="TIGR01049">
    <property type="entry name" value="rpsJ_bact"/>
    <property type="match status" value="1"/>
</dbReference>
<dbReference type="PANTHER" id="PTHR11700">
    <property type="entry name" value="30S RIBOSOMAL PROTEIN S10 FAMILY MEMBER"/>
    <property type="match status" value="1"/>
</dbReference>
<dbReference type="Pfam" id="PF00338">
    <property type="entry name" value="Ribosomal_S10"/>
    <property type="match status" value="1"/>
</dbReference>
<dbReference type="PRINTS" id="PR00971">
    <property type="entry name" value="RIBOSOMALS10"/>
</dbReference>
<dbReference type="SMART" id="SM01403">
    <property type="entry name" value="Ribosomal_S10"/>
    <property type="match status" value="1"/>
</dbReference>
<dbReference type="SUPFAM" id="SSF54999">
    <property type="entry name" value="Ribosomal protein S10"/>
    <property type="match status" value="1"/>
</dbReference>
<dbReference type="PROSITE" id="PS00361">
    <property type="entry name" value="RIBOSOMAL_S10"/>
    <property type="match status" value="1"/>
</dbReference>
<organism>
    <name type="scientific">Escherichia coli (strain SMS-3-5 / SECEC)</name>
    <dbReference type="NCBI Taxonomy" id="439855"/>
    <lineage>
        <taxon>Bacteria</taxon>
        <taxon>Pseudomonadati</taxon>
        <taxon>Pseudomonadota</taxon>
        <taxon>Gammaproteobacteria</taxon>
        <taxon>Enterobacterales</taxon>
        <taxon>Enterobacteriaceae</taxon>
        <taxon>Escherichia</taxon>
    </lineage>
</organism>
<accession>B1LHD5</accession>
<gene>
    <name evidence="1" type="primary">rpsJ</name>
    <name type="ordered locus">EcSMS35_3616</name>
</gene>
<evidence type="ECO:0000255" key="1">
    <source>
        <dbReference type="HAMAP-Rule" id="MF_00508"/>
    </source>
</evidence>
<evidence type="ECO:0000305" key="2"/>
<protein>
    <recommendedName>
        <fullName evidence="1">Small ribosomal subunit protein uS10</fullName>
    </recommendedName>
    <alternativeName>
        <fullName evidence="2">30S ribosomal protein S10</fullName>
    </alternativeName>
</protein>
<reference key="1">
    <citation type="journal article" date="2008" name="J. Bacteriol.">
        <title>Insights into the environmental resistance gene pool from the genome sequence of the multidrug-resistant environmental isolate Escherichia coli SMS-3-5.</title>
        <authorList>
            <person name="Fricke W.F."/>
            <person name="Wright M.S."/>
            <person name="Lindell A.H."/>
            <person name="Harkins D.M."/>
            <person name="Baker-Austin C."/>
            <person name="Ravel J."/>
            <person name="Stepanauskas R."/>
        </authorList>
    </citation>
    <scope>NUCLEOTIDE SEQUENCE [LARGE SCALE GENOMIC DNA]</scope>
    <source>
        <strain>SMS-3-5 / SECEC</strain>
    </source>
</reference>
<proteinExistence type="inferred from homology"/>
<feature type="chain" id="PRO_1000127123" description="Small ribosomal subunit protein uS10">
    <location>
        <begin position="1"/>
        <end position="103"/>
    </location>
</feature>